<feature type="chain" id="PRO_0000401204" description="F-box/LRR-repeat protein 21">
    <location>
        <begin position="1"/>
        <end position="434"/>
    </location>
</feature>
<feature type="domain" description="F-box" evidence="2">
    <location>
        <begin position="39"/>
        <end position="85"/>
    </location>
</feature>
<feature type="repeat" description="LRR 1">
    <location>
        <begin position="140"/>
        <end position="165"/>
    </location>
</feature>
<feature type="repeat" description="LRR 2">
    <location>
        <begin position="187"/>
        <end position="213"/>
    </location>
</feature>
<feature type="repeat" description="LRR 3">
    <location>
        <begin position="214"/>
        <end position="239"/>
    </location>
</feature>
<feature type="repeat" description="LRR 4">
    <location>
        <begin position="242"/>
        <end position="265"/>
    </location>
</feature>
<feature type="repeat" description="LRR 5">
    <location>
        <begin position="322"/>
        <end position="347"/>
    </location>
</feature>
<feature type="repeat" description="LRR 6">
    <location>
        <begin position="349"/>
        <end position="374"/>
    </location>
</feature>
<feature type="repeat" description="LRR 7">
    <location>
        <begin position="375"/>
        <end position="400"/>
    </location>
</feature>
<feature type="splice variant" id="VSP_040140" description="In isoform 2." evidence="4">
    <original>SHFVSALT</original>
    <variation>TRQWMILL</variation>
    <location>
        <begin position="164"/>
        <end position="171"/>
    </location>
</feature>
<feature type="splice variant" id="VSP_040141" description="In isoform 2." evidence="4">
    <location>
        <begin position="172"/>
        <end position="434"/>
    </location>
</feature>
<keyword id="KW-0025">Alternative splicing</keyword>
<keyword id="KW-0090">Biological rhythms</keyword>
<keyword id="KW-0963">Cytoplasm</keyword>
<keyword id="KW-0433">Leucine-rich repeat</keyword>
<keyword id="KW-0539">Nucleus</keyword>
<keyword id="KW-1185">Reference proteome</keyword>
<keyword id="KW-0677">Repeat</keyword>
<keyword id="KW-0833">Ubl conjugation pathway</keyword>
<gene>
    <name type="primary">Fbxl21</name>
</gene>
<name>FXL21_SHEEP</name>
<organism>
    <name type="scientific">Ovis aries</name>
    <name type="common">Sheep</name>
    <dbReference type="NCBI Taxonomy" id="9940"/>
    <lineage>
        <taxon>Eukaryota</taxon>
        <taxon>Metazoa</taxon>
        <taxon>Chordata</taxon>
        <taxon>Craniata</taxon>
        <taxon>Vertebrata</taxon>
        <taxon>Euteleostomi</taxon>
        <taxon>Mammalia</taxon>
        <taxon>Eutheria</taxon>
        <taxon>Laurasiatheria</taxon>
        <taxon>Artiodactyla</taxon>
        <taxon>Ruminantia</taxon>
        <taxon>Pecora</taxon>
        <taxon>Bovidae</taxon>
        <taxon>Caprinae</taxon>
        <taxon>Ovis</taxon>
    </lineage>
</organism>
<reference key="1">
    <citation type="journal article" date="2008" name="PLoS ONE">
        <title>Implication of the F-Box Protein FBXL21 in circadian pacemaker function in mammals.</title>
        <authorList>
            <person name="Dardente H."/>
            <person name="Mendoza J."/>
            <person name="Fustin J.M."/>
            <person name="Challet E."/>
            <person name="Hazlerigg D.G."/>
        </authorList>
    </citation>
    <scope>NUCLEOTIDE SEQUENCE [MRNA] (ISOFORMS 1 AND 2)</scope>
    <scope>FUNCTION</scope>
    <scope>INTERACTION WITH CRY1</scope>
    <scope>TISSUE SPECIFICITY</scope>
</reference>
<accession>B3FL73</accession>
<accession>B3FL74</accession>
<dbReference type="EMBL" id="EU239380">
    <property type="protein sequence ID" value="ABY65115.1"/>
    <property type="molecule type" value="mRNA"/>
</dbReference>
<dbReference type="EMBL" id="EU239381">
    <property type="protein sequence ID" value="ABY65116.1"/>
    <property type="molecule type" value="mRNA"/>
</dbReference>
<dbReference type="RefSeq" id="NP_001123210.1">
    <molecule id="B3FL73-1"/>
    <property type="nucleotide sequence ID" value="NM_001129738.1"/>
</dbReference>
<dbReference type="SMR" id="B3FL73"/>
<dbReference type="STRING" id="9940.ENSOARP00000015923"/>
<dbReference type="PaxDb" id="9940-ENSOARP00000015923"/>
<dbReference type="GeneID" id="100169936"/>
<dbReference type="KEGG" id="oas:100169936"/>
<dbReference type="CTD" id="26223"/>
<dbReference type="eggNOG" id="KOG1947">
    <property type="taxonomic scope" value="Eukaryota"/>
</dbReference>
<dbReference type="OrthoDB" id="9974792at2759"/>
<dbReference type="UniPathway" id="UPA00143"/>
<dbReference type="Proteomes" id="UP000002356">
    <property type="component" value="Unplaced"/>
</dbReference>
<dbReference type="GO" id="GO:0005829">
    <property type="term" value="C:cytosol"/>
    <property type="evidence" value="ECO:0000250"/>
    <property type="project" value="UniProtKB"/>
</dbReference>
<dbReference type="GO" id="GO:0005634">
    <property type="term" value="C:nucleus"/>
    <property type="evidence" value="ECO:0000250"/>
    <property type="project" value="UniProtKB"/>
</dbReference>
<dbReference type="GO" id="GO:0019005">
    <property type="term" value="C:SCF ubiquitin ligase complex"/>
    <property type="evidence" value="ECO:0000250"/>
    <property type="project" value="UniProtKB"/>
</dbReference>
<dbReference type="GO" id="GO:0043153">
    <property type="term" value="P:entrainment of circadian clock by photoperiod"/>
    <property type="evidence" value="ECO:0000250"/>
    <property type="project" value="UniProtKB"/>
</dbReference>
<dbReference type="GO" id="GO:0016567">
    <property type="term" value="P:protein ubiquitination"/>
    <property type="evidence" value="ECO:0000250"/>
    <property type="project" value="UniProtKB"/>
</dbReference>
<dbReference type="GO" id="GO:0048511">
    <property type="term" value="P:rhythmic process"/>
    <property type="evidence" value="ECO:0007669"/>
    <property type="project" value="UniProtKB-KW"/>
</dbReference>
<dbReference type="CDD" id="cd23956">
    <property type="entry name" value="FBXL21_LRR"/>
    <property type="match status" value="1"/>
</dbReference>
<dbReference type="FunFam" id="1.20.1280.50:FF:000005">
    <property type="entry name" value="F-box/LRR-repeat protein 3 isoform X1"/>
    <property type="match status" value="1"/>
</dbReference>
<dbReference type="FunFam" id="3.80.10.10:FF:000010">
    <property type="entry name" value="F-box/LRR-repeat protein 3 isoform X1"/>
    <property type="match status" value="1"/>
</dbReference>
<dbReference type="Gene3D" id="1.20.1280.50">
    <property type="match status" value="1"/>
</dbReference>
<dbReference type="Gene3D" id="3.80.10.10">
    <property type="entry name" value="Ribonuclease Inhibitor"/>
    <property type="match status" value="1"/>
</dbReference>
<dbReference type="InterPro" id="IPR036047">
    <property type="entry name" value="F-box-like_dom_sf"/>
</dbReference>
<dbReference type="InterPro" id="IPR001810">
    <property type="entry name" value="F-box_dom"/>
</dbReference>
<dbReference type="InterPro" id="IPR006553">
    <property type="entry name" value="Leu-rich_rpt_Cys-con_subtyp"/>
</dbReference>
<dbReference type="InterPro" id="IPR032675">
    <property type="entry name" value="LRR_dom_sf"/>
</dbReference>
<dbReference type="PANTHER" id="PTHR16134">
    <property type="entry name" value="F-BOX/TPR REPEAT PROTEIN POF3"/>
    <property type="match status" value="1"/>
</dbReference>
<dbReference type="PANTHER" id="PTHR16134:SF2">
    <property type="entry name" value="F-BOX_LRR-REPEAT PROTEIN 21-RELATED"/>
    <property type="match status" value="1"/>
</dbReference>
<dbReference type="Pfam" id="PF12937">
    <property type="entry name" value="F-box-like"/>
    <property type="match status" value="1"/>
</dbReference>
<dbReference type="SMART" id="SM00256">
    <property type="entry name" value="FBOX"/>
    <property type="match status" value="1"/>
</dbReference>
<dbReference type="SMART" id="SM00367">
    <property type="entry name" value="LRR_CC"/>
    <property type="match status" value="2"/>
</dbReference>
<dbReference type="SUPFAM" id="SSF81383">
    <property type="entry name" value="F-box domain"/>
    <property type="match status" value="1"/>
</dbReference>
<dbReference type="SUPFAM" id="SSF52047">
    <property type="entry name" value="RNI-like"/>
    <property type="match status" value="1"/>
</dbReference>
<dbReference type="PROSITE" id="PS50181">
    <property type="entry name" value="FBOX"/>
    <property type="match status" value="1"/>
</dbReference>
<protein>
    <recommendedName>
        <fullName>F-box/LRR-repeat protein 21</fullName>
    </recommendedName>
    <alternativeName>
        <fullName>F-box and leucine-rich repeat protein 21</fullName>
    </alternativeName>
</protein>
<sequence>MKRNRLSFMNKVLLSSPAVKQPRLGCCSPLSQAHMRAARLDWGSLPHRVVLCVFQYLPLIDRARASSVCRRWNEVFHIPDLWRKFEFELNQSATSYFNSTHPDLIQQIIKKHAAHLQYVSFKVDSSTESAEAACGILSQLVNCSTQTLGLISTAKPSFMTMSKSHFVSALTVLFVNSKSLSSIKIEDTPVDDPSLSILVANNSDTLRRLKMSSCPHVSSDGILCVADHCQGLRELALNYYMLSDELLLALSNETHVNLEHLRIDVVSENPGQIEFHSIKRQSWDALIKHSPGVNVVMYFFLYEEEMETFFKEETPVTHLYFGRSVSKGILGRLSLNCPRLVELVVCANGIQVIDNELICIAEHCKNLTALGLSECEVSCTAFIEFVRLCGRKLTHLSIMEDVLIPDDVCSLDEIHTEVSKYLGRIWFPDVMPVW</sequence>
<proteinExistence type="evidence at protein level"/>
<evidence type="ECO:0000250" key="1"/>
<evidence type="ECO:0000255" key="2">
    <source>
        <dbReference type="PROSITE-ProRule" id="PRU00080"/>
    </source>
</evidence>
<evidence type="ECO:0000269" key="3">
    <source>
    </source>
</evidence>
<evidence type="ECO:0000303" key="4">
    <source>
    </source>
</evidence>
<comment type="function">
    <text evidence="3">Substrate-recognition component of the SCF(FBXL21) E3 ubiquitin ligase complex involved in circadian rhythm function. Plays a key role in the maintenance of both the speed and the robustness of the circadian clock oscillation. The SCF(FBXL21) complex mainly acts in the cytosol and mediates ubiquitination of CRY proteins (CRY1 and CRY2), leading to CRY proteins stabilization. The SCF(FBXL21) complex counteracts the activity of the SCF(FBXL3) complex and protects CRY proteins from degradation. Involved in the hypothalamic suprachiasmatic nucleus (SCN) clock regulating temporal organization of the daily activities.</text>
</comment>
<comment type="pathway">
    <text>Protein modification; protein ubiquitination.</text>
</comment>
<comment type="subunit">
    <text evidence="1 3">Part of the SCF (SKP1-CUL1-F-box) E3 ubiquitin-protein ligase complex SCF(FBXL21) composed of CUL1, SKP1, RBX1 and FBXL21. Interacts with CRY2 (By similarity). Interacts with CRY1.</text>
</comment>
<comment type="subcellular location">
    <subcellularLocation>
        <location evidence="1">Cytoplasm</location>
        <location evidence="1">Cytosol</location>
    </subcellularLocation>
    <subcellularLocation>
        <location evidence="1">Nucleus</location>
    </subcellularLocation>
    <text evidence="1">Mainly localizes in the cytosol. Present at low level in the nucleus (By similarity).</text>
</comment>
<comment type="alternative products">
    <event type="alternative splicing"/>
    <isoform>
        <id>B3FL73-1</id>
        <name>1</name>
        <sequence type="displayed"/>
    </isoform>
    <isoform>
        <id>B3FL73-2</id>
        <name>2</name>
        <sequence type="described" ref="VSP_040140 VSP_040141"/>
    </isoform>
</comment>
<comment type="tissue specificity">
    <text evidence="3">Expressed in the adenohypophysis, hypothalamus (especially in the suprachiasmatic nucleus or nuclei, SCN) and pineal, all neuroendocrine structures associated with timing and homeostasis.</text>
</comment>